<protein>
    <recommendedName>
        <fullName evidence="1">UPF0391 membrane protein YtjA</fullName>
    </recommendedName>
</protein>
<feature type="chain" id="PRO_0000256789" description="UPF0391 membrane protein YtjA">
    <location>
        <begin position="1"/>
        <end position="53"/>
    </location>
</feature>
<feature type="transmembrane region" description="Helical" evidence="1">
    <location>
        <begin position="4"/>
        <end position="24"/>
    </location>
</feature>
<feature type="transmembrane region" description="Helical" evidence="1">
    <location>
        <begin position="30"/>
        <end position="48"/>
    </location>
</feature>
<gene>
    <name evidence="1" type="primary">ytjA</name>
    <name type="ordered locus">SSON_4527</name>
</gene>
<proteinExistence type="inferred from homology"/>
<comment type="subcellular location">
    <subcellularLocation>
        <location evidence="1">Cell membrane</location>
        <topology evidence="1">Multi-pass membrane protein</topology>
    </subcellularLocation>
</comment>
<comment type="similarity">
    <text evidence="1">Belongs to the UPF0391 family.</text>
</comment>
<name>YTJA_SHISS</name>
<reference key="1">
    <citation type="journal article" date="2005" name="Nucleic Acids Res.">
        <title>Genome dynamics and diversity of Shigella species, the etiologic agents of bacillary dysentery.</title>
        <authorList>
            <person name="Yang F."/>
            <person name="Yang J."/>
            <person name="Zhang X."/>
            <person name="Chen L."/>
            <person name="Jiang Y."/>
            <person name="Yan Y."/>
            <person name="Tang X."/>
            <person name="Wang J."/>
            <person name="Xiong Z."/>
            <person name="Dong J."/>
            <person name="Xue Y."/>
            <person name="Zhu Y."/>
            <person name="Xu X."/>
            <person name="Sun L."/>
            <person name="Chen S."/>
            <person name="Nie H."/>
            <person name="Peng J."/>
            <person name="Xu J."/>
            <person name="Wang Y."/>
            <person name="Yuan Z."/>
            <person name="Wen Y."/>
            <person name="Yao Z."/>
            <person name="Shen Y."/>
            <person name="Qiang B."/>
            <person name="Hou Y."/>
            <person name="Yu J."/>
            <person name="Jin Q."/>
        </authorList>
    </citation>
    <scope>NUCLEOTIDE SEQUENCE [LARGE SCALE GENOMIC DNA]</scope>
    <source>
        <strain>Ss046</strain>
    </source>
</reference>
<dbReference type="EMBL" id="CP000038">
    <property type="protein sequence ID" value="AAZ90995.1"/>
    <property type="molecule type" value="Genomic_DNA"/>
</dbReference>
<dbReference type="RefSeq" id="WP_000490275.1">
    <property type="nucleotide sequence ID" value="NC_007384.1"/>
</dbReference>
<dbReference type="KEGG" id="ssn:SSON_4527"/>
<dbReference type="HOGENOM" id="CLU_187346_2_0_6"/>
<dbReference type="Proteomes" id="UP000002529">
    <property type="component" value="Chromosome"/>
</dbReference>
<dbReference type="GO" id="GO:0005886">
    <property type="term" value="C:plasma membrane"/>
    <property type="evidence" value="ECO:0007669"/>
    <property type="project" value="UniProtKB-SubCell"/>
</dbReference>
<dbReference type="HAMAP" id="MF_01361">
    <property type="entry name" value="UPF0391"/>
    <property type="match status" value="1"/>
</dbReference>
<dbReference type="InterPro" id="IPR009760">
    <property type="entry name" value="DUF1328"/>
</dbReference>
<dbReference type="NCBIfam" id="NF010229">
    <property type="entry name" value="PRK13682.1-4"/>
    <property type="match status" value="1"/>
</dbReference>
<dbReference type="NCBIfam" id="NF010230">
    <property type="entry name" value="PRK13682.1-5"/>
    <property type="match status" value="1"/>
</dbReference>
<dbReference type="Pfam" id="PF07043">
    <property type="entry name" value="DUF1328"/>
    <property type="match status" value="1"/>
</dbReference>
<dbReference type="PIRSF" id="PIRSF036466">
    <property type="entry name" value="UCP036466"/>
    <property type="match status" value="1"/>
</dbReference>
<keyword id="KW-1003">Cell membrane</keyword>
<keyword id="KW-0472">Membrane</keyword>
<keyword id="KW-1185">Reference proteome</keyword>
<keyword id="KW-0812">Transmembrane</keyword>
<keyword id="KW-1133">Transmembrane helix</keyword>
<evidence type="ECO:0000255" key="1">
    <source>
        <dbReference type="HAMAP-Rule" id="MF_01361"/>
    </source>
</evidence>
<organism>
    <name type="scientific">Shigella sonnei (strain Ss046)</name>
    <dbReference type="NCBI Taxonomy" id="300269"/>
    <lineage>
        <taxon>Bacteria</taxon>
        <taxon>Pseudomonadati</taxon>
        <taxon>Pseudomonadota</taxon>
        <taxon>Gammaproteobacteria</taxon>
        <taxon>Enterobacterales</taxon>
        <taxon>Enterobacteriaceae</taxon>
        <taxon>Shigella</taxon>
    </lineage>
</organism>
<accession>Q3YU17</accession>
<sequence length="53" mass="5536">MFRWGIIFLVIALIAAALGFGGLAGTAAGAAKIVFVVGIILFLVSLFMGRKRP</sequence>